<accession>P56745</accession>
<accession>Q6P6V9</accession>
<sequence length="211" mass="22843">MANAGLQLLGFILASLGWIGSIVSTALPQWKIYSYAGDNIVTAQAIYEGLWMSCVSQSTGQIQCKVFDSLLNLNSTLQATRALMVIGILLGLIAIFVSTIGMKCMRCLEDDEVQKMWMAVIGGIIFVISGLATLVATAWYGNRIVQEFYDPMTPVNARYEFGQALFTGWAAASLCLLGGALLSCSCPRKTTSYPTPRPYPKPTPSSGKDYV</sequence>
<feature type="chain" id="PRO_0000144731" description="Claudin-1">
    <location>
        <begin position="1"/>
        <end position="211"/>
    </location>
</feature>
<feature type="topological domain" description="Cytoplasmic" evidence="1">
    <location>
        <begin position="1"/>
        <end position="7"/>
    </location>
</feature>
<feature type="transmembrane region" description="Helical" evidence="4">
    <location>
        <begin position="8"/>
        <end position="28"/>
    </location>
</feature>
<feature type="topological domain" description="Extracellular" evidence="4">
    <location>
        <begin position="29"/>
        <end position="81"/>
    </location>
</feature>
<feature type="transmembrane region" description="Helical" evidence="4">
    <location>
        <begin position="82"/>
        <end position="102"/>
    </location>
</feature>
<feature type="topological domain" description="Cytoplasmic" evidence="4">
    <location>
        <begin position="103"/>
        <end position="115"/>
    </location>
</feature>
<feature type="transmembrane region" description="Helical" evidence="4">
    <location>
        <begin position="116"/>
        <end position="136"/>
    </location>
</feature>
<feature type="topological domain" description="Extracellular" evidence="4">
    <location>
        <begin position="137"/>
        <end position="163"/>
    </location>
</feature>
<feature type="transmembrane region" description="Helical" evidence="4">
    <location>
        <begin position="164"/>
        <end position="184"/>
    </location>
</feature>
<feature type="topological domain" description="Cytoplasmic" evidence="1">
    <location>
        <begin position="185"/>
        <end position="211"/>
    </location>
</feature>
<feature type="region of interest" description="Disordered" evidence="5">
    <location>
        <begin position="190"/>
        <end position="211"/>
    </location>
</feature>
<feature type="region of interest" description="Interactions with TJP1, TJP2, TJP3 and PATJ" evidence="1">
    <location>
        <begin position="210"/>
        <end position="211"/>
    </location>
</feature>
<feature type="disulfide bond" evidence="1">
    <location>
        <begin position="54"/>
        <end position="64"/>
    </location>
</feature>
<feature type="sequence variant" evidence="6">
    <original>V</original>
    <variation>D</variation>
    <location>
        <position position="23"/>
    </location>
</feature>
<feature type="sequence conflict" description="In Ref. 1; AAF04850." evidence="7" ref="1">
    <original>T</original>
    <variation>I</variation>
    <location>
        <position position="133"/>
    </location>
</feature>
<feature type="sequence conflict" description="In Ref. 2; AAH61992." evidence="7" ref="2">
    <original>V</original>
    <variation>I</variation>
    <location>
        <position position="155"/>
    </location>
</feature>
<feature type="sequence conflict" description="In Ref. 2; AAH61992." evidence="7" ref="2">
    <original>S</original>
    <variation>T</variation>
    <location>
        <position position="206"/>
    </location>
</feature>
<reference key="1">
    <citation type="journal article" date="2001" name="Endocrinology">
        <title>Claudin-1 is not restricted to tight junctions in the rat epididymis.</title>
        <authorList>
            <person name="Gregory M."/>
            <person name="Dufresne J."/>
            <person name="Hermo L."/>
            <person name="Cyr D."/>
        </authorList>
    </citation>
    <scope>NUCLEOTIDE SEQUENCE [MRNA]</scope>
    <scope>VARIANT ASP-23</scope>
    <scope>SUBCELLULAR LOCATION</scope>
    <scope>TISSUE SPECIFICITY</scope>
    <source>
        <strain>Sprague-Dawley</strain>
    </source>
</reference>
<reference key="2">
    <citation type="journal article" date="2004" name="Genome Res.">
        <title>The status, quality, and expansion of the NIH full-length cDNA project: the Mammalian Gene Collection (MGC).</title>
        <authorList>
            <consortium name="The MGC Project Team"/>
        </authorList>
    </citation>
    <scope>NUCLEOTIDE SEQUENCE [LARGE SCALE MRNA]</scope>
    <source>
        <tissue>Prostate</tissue>
    </source>
</reference>
<comment type="function">
    <text evidence="1">Claudins function as major constituents of the tight junction complexes that regulate the permeability of epithelia. While some claudin family members play essential roles in the formation of impermeable barriers, others mediate the permeability to ions and small molecules. Often, several claudin family members are coexpressed and interact with each other, and this determines the overall permeability. CLDN1 is required to prevent the paracellular diffusion of small molecules through tight junctions in the epidermis and is required for the normal barrier function of the skin. Required for normal water homeostasis and to prevent excessive water loss through the skin, probably via an indirect effect on the expression levels of other proteins, since CLDN1 itself seems to be dispensable for water barrier formation in keratinocyte tight junctions (By similarity).</text>
</comment>
<comment type="subunit">
    <text evidence="2 3">Can form homo- and heteropolymers with other CLDN. Homopolymers interact with CLDN3, but not CLDN2, homopolymers. Directly interacts with TJP1/ZO-1, TJP2/ZO-2 and TJP3/ZO-3. Interacts with MPDZ and PATJ. Interacts with OCLN, CD81, CLDN4, CLDN6 and CLDN9.</text>
</comment>
<comment type="subcellular location">
    <subcellularLocation>
        <location evidence="6">Cell junction</location>
        <location evidence="6">Tight junction</location>
    </subcellularLocation>
    <subcellularLocation>
        <location evidence="6">Cell membrane</location>
        <topology evidence="6">Multi-pass membrane protein</topology>
    </subcellularLocation>
    <subcellularLocation>
        <location evidence="3">Basolateral cell membrane</location>
    </subcellularLocation>
    <text evidence="3">Associates with CD81 and the CLDN1-CD81 complex localizes to the basolateral cell membrane.</text>
</comment>
<comment type="tissue specificity">
    <text evidence="6">Detected in epididymis (at protein level). Detected in testis and epididymis.</text>
</comment>
<comment type="similarity">
    <text evidence="7">Belongs to the claudin family.</text>
</comment>
<keyword id="KW-0965">Cell junction</keyword>
<keyword id="KW-1003">Cell membrane</keyword>
<keyword id="KW-1015">Disulfide bond</keyword>
<keyword id="KW-0472">Membrane</keyword>
<keyword id="KW-1185">Reference proteome</keyword>
<keyword id="KW-0796">Tight junction</keyword>
<keyword id="KW-0812">Transmembrane</keyword>
<keyword id="KW-1133">Transmembrane helix</keyword>
<name>CLD1_RAT</name>
<protein>
    <recommendedName>
        <fullName>Claudin-1</fullName>
    </recommendedName>
</protein>
<evidence type="ECO:0000250" key="1"/>
<evidence type="ECO:0000250" key="2">
    <source>
        <dbReference type="UniProtKB" id="O88551"/>
    </source>
</evidence>
<evidence type="ECO:0000250" key="3">
    <source>
        <dbReference type="UniProtKB" id="O95832"/>
    </source>
</evidence>
<evidence type="ECO:0000255" key="4"/>
<evidence type="ECO:0000256" key="5">
    <source>
        <dbReference type="SAM" id="MobiDB-lite"/>
    </source>
</evidence>
<evidence type="ECO:0000269" key="6">
    <source>
    </source>
</evidence>
<evidence type="ECO:0000305" key="7"/>
<organism>
    <name type="scientific">Rattus norvegicus</name>
    <name type="common">Rat</name>
    <dbReference type="NCBI Taxonomy" id="10116"/>
    <lineage>
        <taxon>Eukaryota</taxon>
        <taxon>Metazoa</taxon>
        <taxon>Chordata</taxon>
        <taxon>Craniata</taxon>
        <taxon>Vertebrata</taxon>
        <taxon>Euteleostomi</taxon>
        <taxon>Mammalia</taxon>
        <taxon>Eutheria</taxon>
        <taxon>Euarchontoglires</taxon>
        <taxon>Glires</taxon>
        <taxon>Rodentia</taxon>
        <taxon>Myomorpha</taxon>
        <taxon>Muroidea</taxon>
        <taxon>Muridae</taxon>
        <taxon>Murinae</taxon>
        <taxon>Rattus</taxon>
    </lineage>
</organism>
<dbReference type="EMBL" id="AF195500">
    <property type="protein sequence ID" value="AAF04850.1"/>
    <property type="molecule type" value="mRNA"/>
</dbReference>
<dbReference type="EMBL" id="BC061992">
    <property type="protein sequence ID" value="AAH61992.1"/>
    <property type="molecule type" value="mRNA"/>
</dbReference>
<dbReference type="RefSeq" id="NP_113887.3">
    <property type="nucleotide sequence ID" value="NM_031699.3"/>
</dbReference>
<dbReference type="SMR" id="P56745"/>
<dbReference type="FunCoup" id="P56745">
    <property type="interactions" value="588"/>
</dbReference>
<dbReference type="STRING" id="10116.ENSRNOP00000002640"/>
<dbReference type="GlyGen" id="P56745">
    <property type="glycosylation" value="1 site"/>
</dbReference>
<dbReference type="iPTMnet" id="P56745"/>
<dbReference type="PhosphoSitePlus" id="P56745"/>
<dbReference type="PaxDb" id="10116-ENSRNOP00000002640"/>
<dbReference type="Ensembl" id="ENSRNOT00000002640.6">
    <property type="protein sequence ID" value="ENSRNOP00000002640.3"/>
    <property type="gene ID" value="ENSRNOG00000001926.7"/>
</dbReference>
<dbReference type="GeneID" id="65129"/>
<dbReference type="KEGG" id="rno:65129"/>
<dbReference type="UCSC" id="RGD:68422">
    <property type="organism name" value="rat"/>
</dbReference>
<dbReference type="AGR" id="RGD:68422"/>
<dbReference type="CTD" id="9076"/>
<dbReference type="RGD" id="68422">
    <property type="gene designation" value="Cldn1"/>
</dbReference>
<dbReference type="eggNOG" id="ENOG502R7HF">
    <property type="taxonomic scope" value="Eukaryota"/>
</dbReference>
<dbReference type="GeneTree" id="ENSGT00940000155387"/>
<dbReference type="HOGENOM" id="CLU_076370_2_3_1"/>
<dbReference type="InParanoid" id="P56745"/>
<dbReference type="OMA" id="MPQWKIS"/>
<dbReference type="OrthoDB" id="10025519at2759"/>
<dbReference type="PhylomeDB" id="P56745"/>
<dbReference type="TreeFam" id="TF331936"/>
<dbReference type="PRO" id="PR:P56745"/>
<dbReference type="Proteomes" id="UP000002494">
    <property type="component" value="Chromosome 11"/>
</dbReference>
<dbReference type="Bgee" id="ENSRNOG00000001926">
    <property type="expression patterns" value="Expressed in liver and 18 other cell types or tissues"/>
</dbReference>
<dbReference type="GO" id="GO:0016324">
    <property type="term" value="C:apical plasma membrane"/>
    <property type="evidence" value="ECO:0000314"/>
    <property type="project" value="RGD"/>
</dbReference>
<dbReference type="GO" id="GO:0016323">
    <property type="term" value="C:basolateral plasma membrane"/>
    <property type="evidence" value="ECO:0000266"/>
    <property type="project" value="RGD"/>
</dbReference>
<dbReference type="GO" id="GO:0005923">
    <property type="term" value="C:bicellular tight junction"/>
    <property type="evidence" value="ECO:0000314"/>
    <property type="project" value="RGD"/>
</dbReference>
<dbReference type="GO" id="GO:0030054">
    <property type="term" value="C:cell junction"/>
    <property type="evidence" value="ECO:0000266"/>
    <property type="project" value="RGD"/>
</dbReference>
<dbReference type="GO" id="GO:0005911">
    <property type="term" value="C:cell-cell junction"/>
    <property type="evidence" value="ECO:0000266"/>
    <property type="project" value="RGD"/>
</dbReference>
<dbReference type="GO" id="GO:0016328">
    <property type="term" value="C:lateral plasma membrane"/>
    <property type="evidence" value="ECO:0000314"/>
    <property type="project" value="RGD"/>
</dbReference>
<dbReference type="GO" id="GO:0005886">
    <property type="term" value="C:plasma membrane"/>
    <property type="evidence" value="ECO:0000250"/>
    <property type="project" value="UniProtKB"/>
</dbReference>
<dbReference type="GO" id="GO:0032991">
    <property type="term" value="C:protein-containing complex"/>
    <property type="evidence" value="ECO:0000266"/>
    <property type="project" value="RGD"/>
</dbReference>
<dbReference type="GO" id="GO:0070160">
    <property type="term" value="C:tight junction"/>
    <property type="evidence" value="ECO:0000266"/>
    <property type="project" value="RGD"/>
</dbReference>
<dbReference type="GO" id="GO:0042802">
    <property type="term" value="F:identical protein binding"/>
    <property type="evidence" value="ECO:0000250"/>
    <property type="project" value="UniProtKB"/>
</dbReference>
<dbReference type="GO" id="GO:0005198">
    <property type="term" value="F:structural molecule activity"/>
    <property type="evidence" value="ECO:0007669"/>
    <property type="project" value="InterPro"/>
</dbReference>
<dbReference type="GO" id="GO:0001618">
    <property type="term" value="F:virus receptor activity"/>
    <property type="evidence" value="ECO:0000266"/>
    <property type="project" value="RGD"/>
</dbReference>
<dbReference type="GO" id="GO:0070830">
    <property type="term" value="P:bicellular tight junction assembly"/>
    <property type="evidence" value="ECO:0000266"/>
    <property type="project" value="RGD"/>
</dbReference>
<dbReference type="GO" id="GO:0016338">
    <property type="term" value="P:calcium-independent cell-cell adhesion via plasma membrane cell-adhesion molecules"/>
    <property type="evidence" value="ECO:0000250"/>
    <property type="project" value="UniProtKB"/>
</dbReference>
<dbReference type="GO" id="GO:0007155">
    <property type="term" value="P:cell adhesion"/>
    <property type="evidence" value="ECO:0000318"/>
    <property type="project" value="GO_Central"/>
</dbReference>
<dbReference type="GO" id="GO:0034331">
    <property type="term" value="P:cell junction maintenance"/>
    <property type="evidence" value="ECO:0000266"/>
    <property type="project" value="RGD"/>
</dbReference>
<dbReference type="GO" id="GO:0045216">
    <property type="term" value="P:cell-cell junction organization"/>
    <property type="evidence" value="ECO:0000266"/>
    <property type="project" value="RGD"/>
</dbReference>
<dbReference type="GO" id="GO:1903545">
    <property type="term" value="P:cellular response to butyrate"/>
    <property type="evidence" value="ECO:0000270"/>
    <property type="project" value="RGD"/>
</dbReference>
<dbReference type="GO" id="GO:0071284">
    <property type="term" value="P:cellular response to lead ion"/>
    <property type="evidence" value="ECO:0000270"/>
    <property type="project" value="RGD"/>
</dbReference>
<dbReference type="GO" id="GO:0071560">
    <property type="term" value="P:cellular response to transforming growth factor beta stimulus"/>
    <property type="evidence" value="ECO:0000270"/>
    <property type="project" value="RGD"/>
</dbReference>
<dbReference type="GO" id="GO:0071356">
    <property type="term" value="P:cellular response to tumor necrosis factor"/>
    <property type="evidence" value="ECO:0000270"/>
    <property type="project" value="RGD"/>
</dbReference>
<dbReference type="GO" id="GO:0071346">
    <property type="term" value="P:cellular response to type II interferon"/>
    <property type="evidence" value="ECO:0000270"/>
    <property type="project" value="RGD"/>
</dbReference>
<dbReference type="GO" id="GO:0008065">
    <property type="term" value="P:establishment of blood-nerve barrier"/>
    <property type="evidence" value="ECO:0000315"/>
    <property type="project" value="RGD"/>
</dbReference>
<dbReference type="GO" id="GO:0090557">
    <property type="term" value="P:establishment of endothelial intestinal barrier"/>
    <property type="evidence" value="ECO:0000315"/>
    <property type="project" value="RGD"/>
</dbReference>
<dbReference type="GO" id="GO:0061436">
    <property type="term" value="P:establishment of skin barrier"/>
    <property type="evidence" value="ECO:0000250"/>
    <property type="project" value="UniProtKB"/>
</dbReference>
<dbReference type="GO" id="GO:0097421">
    <property type="term" value="P:liver regeneration"/>
    <property type="evidence" value="ECO:0000270"/>
    <property type="project" value="RGD"/>
</dbReference>
<dbReference type="GO" id="GO:1903348">
    <property type="term" value="P:positive regulation of bicellular tight junction assembly"/>
    <property type="evidence" value="ECO:0000315"/>
    <property type="project" value="RGD"/>
</dbReference>
<dbReference type="GO" id="GO:0030335">
    <property type="term" value="P:positive regulation of cell migration"/>
    <property type="evidence" value="ECO:0000266"/>
    <property type="project" value="RGD"/>
</dbReference>
<dbReference type="GO" id="GO:0060054">
    <property type="term" value="P:positive regulation of epithelial cell proliferation involved in wound healing"/>
    <property type="evidence" value="ECO:0000266"/>
    <property type="project" value="RGD"/>
</dbReference>
<dbReference type="GO" id="GO:0090303">
    <property type="term" value="P:positive regulation of wound healing"/>
    <property type="evidence" value="ECO:0000266"/>
    <property type="project" value="RGD"/>
</dbReference>
<dbReference type="GO" id="GO:0051259">
    <property type="term" value="P:protein complex oligomerization"/>
    <property type="evidence" value="ECO:0000266"/>
    <property type="project" value="RGD"/>
</dbReference>
<dbReference type="GO" id="GO:0071548">
    <property type="term" value="P:response to dexamethasone"/>
    <property type="evidence" value="ECO:0000270"/>
    <property type="project" value="RGD"/>
</dbReference>
<dbReference type="GO" id="GO:0045471">
    <property type="term" value="P:response to ethanol"/>
    <property type="evidence" value="ECO:0000270"/>
    <property type="project" value="RGD"/>
</dbReference>
<dbReference type="GO" id="GO:0070673">
    <property type="term" value="P:response to interleukin-18"/>
    <property type="evidence" value="ECO:0000315"/>
    <property type="project" value="RGD"/>
</dbReference>
<dbReference type="GO" id="GO:0032496">
    <property type="term" value="P:response to lipopolysaccharide"/>
    <property type="evidence" value="ECO:0000270"/>
    <property type="project" value="RGD"/>
</dbReference>
<dbReference type="GO" id="GO:0009636">
    <property type="term" value="P:response to toxic substance"/>
    <property type="evidence" value="ECO:0000270"/>
    <property type="project" value="RGD"/>
</dbReference>
<dbReference type="GO" id="GO:0061772">
    <property type="term" value="P:xenobiotic transport across blood-nerve barrier"/>
    <property type="evidence" value="ECO:0000315"/>
    <property type="project" value="RGD"/>
</dbReference>
<dbReference type="FunFam" id="1.20.140.150:FF:000001">
    <property type="entry name" value="Claudin"/>
    <property type="match status" value="1"/>
</dbReference>
<dbReference type="Gene3D" id="1.20.140.150">
    <property type="match status" value="1"/>
</dbReference>
<dbReference type="InterPro" id="IPR006187">
    <property type="entry name" value="Claudin"/>
</dbReference>
<dbReference type="InterPro" id="IPR003548">
    <property type="entry name" value="Claudin1"/>
</dbReference>
<dbReference type="InterPro" id="IPR017974">
    <property type="entry name" value="Claudin_CS"/>
</dbReference>
<dbReference type="InterPro" id="IPR004031">
    <property type="entry name" value="PMP22/EMP/MP20/Claudin"/>
</dbReference>
<dbReference type="PANTHER" id="PTHR12002">
    <property type="entry name" value="CLAUDIN"/>
    <property type="match status" value="1"/>
</dbReference>
<dbReference type="Pfam" id="PF00822">
    <property type="entry name" value="PMP22_Claudin"/>
    <property type="match status" value="1"/>
</dbReference>
<dbReference type="PRINTS" id="PR01077">
    <property type="entry name" value="CLAUDIN"/>
</dbReference>
<dbReference type="PRINTS" id="PR01377">
    <property type="entry name" value="CLAUDIN1"/>
</dbReference>
<dbReference type="PROSITE" id="PS01346">
    <property type="entry name" value="CLAUDIN"/>
    <property type="match status" value="1"/>
</dbReference>
<gene>
    <name type="primary">Cldn1</name>
</gene>
<proteinExistence type="evidence at protein level"/>